<proteinExistence type="inferred from homology"/>
<keyword id="KW-0687">Ribonucleoprotein</keyword>
<keyword id="KW-0689">Ribosomal protein</keyword>
<keyword id="KW-0694">RNA-binding</keyword>
<keyword id="KW-0699">rRNA-binding</keyword>
<comment type="function">
    <text evidence="1">Binds the lower part of the 30S subunit head. Binds mRNA in the 70S ribosome, positioning it for translation.</text>
</comment>
<comment type="subunit">
    <text evidence="1">Part of the 30S ribosomal subunit. Forms a tight complex with proteins S10 and S14.</text>
</comment>
<comment type="similarity">
    <text evidence="1">Belongs to the universal ribosomal protein uS3 family.</text>
</comment>
<feature type="chain" id="PRO_1000140966" description="Small ribosomal subunit protein uS3">
    <location>
        <begin position="1"/>
        <end position="233"/>
    </location>
</feature>
<feature type="domain" description="KH type-2" evidence="1">
    <location>
        <begin position="39"/>
        <end position="107"/>
    </location>
</feature>
<gene>
    <name evidence="1" type="primary">rpsC</name>
    <name type="ordered locus">EcSMS35_3609</name>
</gene>
<organism>
    <name type="scientific">Escherichia coli (strain SMS-3-5 / SECEC)</name>
    <dbReference type="NCBI Taxonomy" id="439855"/>
    <lineage>
        <taxon>Bacteria</taxon>
        <taxon>Pseudomonadati</taxon>
        <taxon>Pseudomonadota</taxon>
        <taxon>Gammaproteobacteria</taxon>
        <taxon>Enterobacterales</taxon>
        <taxon>Enterobacteriaceae</taxon>
        <taxon>Escherichia</taxon>
    </lineage>
</organism>
<sequence length="233" mass="25983">MGQKVHPNGIRLGIVKPWNSTWFANTKEFADNLDSDFKVRQYLTKELAKASVSRIVIERPAKSIRVTIHTARPGIVIGKKGEDVEKLRKVVADIAGVPAQINIAEVRKPELDAKLVADSITSQLERRVMFRRAMKRAVQNAMRLGAKGIKVEVSGRLGGAEIARTEWYREGRVPLHTLRADIDYNTSEAHTTYGVIGVKVWIFKGEILGGMAAVEQPEKPAAQPKKQQRKGRK</sequence>
<accession>B1LHC8</accession>
<protein>
    <recommendedName>
        <fullName evidence="1">Small ribosomal subunit protein uS3</fullName>
    </recommendedName>
    <alternativeName>
        <fullName evidence="2">30S ribosomal protein S3</fullName>
    </alternativeName>
</protein>
<name>RS3_ECOSM</name>
<dbReference type="EMBL" id="CP000970">
    <property type="protein sequence ID" value="ACB19273.1"/>
    <property type="molecule type" value="Genomic_DNA"/>
</dbReference>
<dbReference type="RefSeq" id="WP_000529945.1">
    <property type="nucleotide sequence ID" value="NC_010498.1"/>
</dbReference>
<dbReference type="SMR" id="B1LHC8"/>
<dbReference type="GeneID" id="97603663"/>
<dbReference type="KEGG" id="ecm:EcSMS35_3609"/>
<dbReference type="HOGENOM" id="CLU_058591_0_2_6"/>
<dbReference type="Proteomes" id="UP000007011">
    <property type="component" value="Chromosome"/>
</dbReference>
<dbReference type="GO" id="GO:0022627">
    <property type="term" value="C:cytosolic small ribosomal subunit"/>
    <property type="evidence" value="ECO:0007669"/>
    <property type="project" value="TreeGrafter"/>
</dbReference>
<dbReference type="GO" id="GO:0003729">
    <property type="term" value="F:mRNA binding"/>
    <property type="evidence" value="ECO:0007669"/>
    <property type="project" value="UniProtKB-UniRule"/>
</dbReference>
<dbReference type="GO" id="GO:0019843">
    <property type="term" value="F:rRNA binding"/>
    <property type="evidence" value="ECO:0007669"/>
    <property type="project" value="UniProtKB-UniRule"/>
</dbReference>
<dbReference type="GO" id="GO:0003735">
    <property type="term" value="F:structural constituent of ribosome"/>
    <property type="evidence" value="ECO:0007669"/>
    <property type="project" value="InterPro"/>
</dbReference>
<dbReference type="GO" id="GO:0006412">
    <property type="term" value="P:translation"/>
    <property type="evidence" value="ECO:0007669"/>
    <property type="project" value="UniProtKB-UniRule"/>
</dbReference>
<dbReference type="CDD" id="cd02412">
    <property type="entry name" value="KH-II_30S_S3"/>
    <property type="match status" value="1"/>
</dbReference>
<dbReference type="FunFam" id="3.30.1140.32:FF:000001">
    <property type="entry name" value="30S ribosomal protein S3"/>
    <property type="match status" value="1"/>
</dbReference>
<dbReference type="FunFam" id="3.30.300.20:FF:000001">
    <property type="entry name" value="30S ribosomal protein S3"/>
    <property type="match status" value="1"/>
</dbReference>
<dbReference type="Gene3D" id="3.30.300.20">
    <property type="match status" value="1"/>
</dbReference>
<dbReference type="Gene3D" id="3.30.1140.32">
    <property type="entry name" value="Ribosomal protein S3, C-terminal domain"/>
    <property type="match status" value="1"/>
</dbReference>
<dbReference type="HAMAP" id="MF_01309_B">
    <property type="entry name" value="Ribosomal_uS3_B"/>
    <property type="match status" value="1"/>
</dbReference>
<dbReference type="InterPro" id="IPR004087">
    <property type="entry name" value="KH_dom"/>
</dbReference>
<dbReference type="InterPro" id="IPR015946">
    <property type="entry name" value="KH_dom-like_a/b"/>
</dbReference>
<dbReference type="InterPro" id="IPR004044">
    <property type="entry name" value="KH_dom_type_2"/>
</dbReference>
<dbReference type="InterPro" id="IPR009019">
    <property type="entry name" value="KH_sf_prok-type"/>
</dbReference>
<dbReference type="InterPro" id="IPR036419">
    <property type="entry name" value="Ribosomal_S3_C_sf"/>
</dbReference>
<dbReference type="InterPro" id="IPR005704">
    <property type="entry name" value="Ribosomal_uS3_bac-typ"/>
</dbReference>
<dbReference type="InterPro" id="IPR001351">
    <property type="entry name" value="Ribosomal_uS3_C"/>
</dbReference>
<dbReference type="InterPro" id="IPR018280">
    <property type="entry name" value="Ribosomal_uS3_CS"/>
</dbReference>
<dbReference type="NCBIfam" id="TIGR01009">
    <property type="entry name" value="rpsC_bact"/>
    <property type="match status" value="1"/>
</dbReference>
<dbReference type="PANTHER" id="PTHR11760">
    <property type="entry name" value="30S/40S RIBOSOMAL PROTEIN S3"/>
    <property type="match status" value="1"/>
</dbReference>
<dbReference type="PANTHER" id="PTHR11760:SF19">
    <property type="entry name" value="SMALL RIBOSOMAL SUBUNIT PROTEIN US3C"/>
    <property type="match status" value="1"/>
</dbReference>
<dbReference type="Pfam" id="PF07650">
    <property type="entry name" value="KH_2"/>
    <property type="match status" value="1"/>
</dbReference>
<dbReference type="Pfam" id="PF00189">
    <property type="entry name" value="Ribosomal_S3_C"/>
    <property type="match status" value="1"/>
</dbReference>
<dbReference type="SMART" id="SM00322">
    <property type="entry name" value="KH"/>
    <property type="match status" value="1"/>
</dbReference>
<dbReference type="SUPFAM" id="SSF54814">
    <property type="entry name" value="Prokaryotic type KH domain (KH-domain type II)"/>
    <property type="match status" value="1"/>
</dbReference>
<dbReference type="SUPFAM" id="SSF54821">
    <property type="entry name" value="Ribosomal protein S3 C-terminal domain"/>
    <property type="match status" value="1"/>
</dbReference>
<dbReference type="PROSITE" id="PS50823">
    <property type="entry name" value="KH_TYPE_2"/>
    <property type="match status" value="1"/>
</dbReference>
<dbReference type="PROSITE" id="PS00548">
    <property type="entry name" value="RIBOSOMAL_S3"/>
    <property type="match status" value="1"/>
</dbReference>
<reference key="1">
    <citation type="journal article" date="2008" name="J. Bacteriol.">
        <title>Insights into the environmental resistance gene pool from the genome sequence of the multidrug-resistant environmental isolate Escherichia coli SMS-3-5.</title>
        <authorList>
            <person name="Fricke W.F."/>
            <person name="Wright M.S."/>
            <person name="Lindell A.H."/>
            <person name="Harkins D.M."/>
            <person name="Baker-Austin C."/>
            <person name="Ravel J."/>
            <person name="Stepanauskas R."/>
        </authorList>
    </citation>
    <scope>NUCLEOTIDE SEQUENCE [LARGE SCALE GENOMIC DNA]</scope>
    <source>
        <strain>SMS-3-5 / SECEC</strain>
    </source>
</reference>
<evidence type="ECO:0000255" key="1">
    <source>
        <dbReference type="HAMAP-Rule" id="MF_01309"/>
    </source>
</evidence>
<evidence type="ECO:0000305" key="2"/>